<gene>
    <name evidence="7" type="primary">PARP6</name>
</gene>
<name>PARP6_HUMAN</name>
<evidence type="ECO:0000255" key="1">
    <source>
        <dbReference type="PROSITE-ProRule" id="PRU00397"/>
    </source>
</evidence>
<evidence type="ECO:0000269" key="2">
    <source>
    </source>
</evidence>
<evidence type="ECO:0000303" key="3">
    <source>
    </source>
</evidence>
<evidence type="ECO:0000303" key="4">
    <source>
    </source>
</evidence>
<evidence type="ECO:0000303" key="5">
    <source ref="4"/>
</evidence>
<evidence type="ECO:0000305" key="6"/>
<evidence type="ECO:0000312" key="7">
    <source>
        <dbReference type="HGNC" id="HGNC:26921"/>
    </source>
</evidence>
<sequence length="630" mass="71115">MDIKGQFWNDDDSEGDNESEEFLYGVQGSCAADLYRHPQLDADIEAVKEIYSENSVSIREYGTIDDVDIDLHINISFLDEEVSTAWKVLRTEPIVLRLRFSLSQYLDGPEPSIEVFQPSNKEGFGLGLQLKKILGMFTSQQWKHLSNDFLKTQQEKRHSWFKASGTIKKFRAGLSIFSPIPKSPSFPIIQDSMLKGKLGVPELRVGRLMNRSISCTMKNPKVEVFGYPPSPQAGLLCPQHVGLPPPARTSPLVSGHCKNIPTLEYGFLVQIMKYAEQRIPTLNEYCVVCDEQHVFQNGSMLKPAVCTRELCVFSFYTLGVMSGAAEEVATGAEVVDLLVAMCRAALESPRKSIIFEPYPSVVDPTDPKTLAFNPKKKNYERLQKALDSVMSIREMTQGSYLEIKKQMDKLDPLAHPLLQWIISSNRSHIVKLPLSRLKFMHTSHQFLLLSSPPAKEARFRTAKKLYGSTFAFHGSHIENWHSILRNGLVNASYTKLQLHGAAYGKGIYLSPISSISFGYSGMGKGQHRMPSKDELVQRYNRMNTIPQTRSIQSRFLQSRNLNCIALCEVITSKDLQKHGNIWVCPVSDHVCTRFFFVYEDGQVGDANINTQDPKIQKEIMRVIGTQVYTN</sequence>
<proteinExistence type="evidence at protein level"/>
<reference key="1">
    <citation type="journal article" date="2004" name="Nat. Genet.">
        <title>Complete sequencing and characterization of 21,243 full-length human cDNAs.</title>
        <authorList>
            <person name="Ota T."/>
            <person name="Suzuki Y."/>
            <person name="Nishikawa T."/>
            <person name="Otsuki T."/>
            <person name="Sugiyama T."/>
            <person name="Irie R."/>
            <person name="Wakamatsu A."/>
            <person name="Hayashi K."/>
            <person name="Sato H."/>
            <person name="Nagai K."/>
            <person name="Kimura K."/>
            <person name="Makita H."/>
            <person name="Sekine M."/>
            <person name="Obayashi M."/>
            <person name="Nishi T."/>
            <person name="Shibahara T."/>
            <person name="Tanaka T."/>
            <person name="Ishii S."/>
            <person name="Yamamoto J."/>
            <person name="Saito K."/>
            <person name="Kawai Y."/>
            <person name="Isono Y."/>
            <person name="Nakamura Y."/>
            <person name="Nagahari K."/>
            <person name="Murakami K."/>
            <person name="Yasuda T."/>
            <person name="Iwayanagi T."/>
            <person name="Wagatsuma M."/>
            <person name="Shiratori A."/>
            <person name="Sudo H."/>
            <person name="Hosoiri T."/>
            <person name="Kaku Y."/>
            <person name="Kodaira H."/>
            <person name="Kondo H."/>
            <person name="Sugawara M."/>
            <person name="Takahashi M."/>
            <person name="Kanda K."/>
            <person name="Yokoi T."/>
            <person name="Furuya T."/>
            <person name="Kikkawa E."/>
            <person name="Omura Y."/>
            <person name="Abe K."/>
            <person name="Kamihara K."/>
            <person name="Katsuta N."/>
            <person name="Sato K."/>
            <person name="Tanikawa M."/>
            <person name="Yamazaki M."/>
            <person name="Ninomiya K."/>
            <person name="Ishibashi T."/>
            <person name="Yamashita H."/>
            <person name="Murakawa K."/>
            <person name="Fujimori K."/>
            <person name="Tanai H."/>
            <person name="Kimata M."/>
            <person name="Watanabe M."/>
            <person name="Hiraoka S."/>
            <person name="Chiba Y."/>
            <person name="Ishida S."/>
            <person name="Ono Y."/>
            <person name="Takiguchi S."/>
            <person name="Watanabe S."/>
            <person name="Yosida M."/>
            <person name="Hotuta T."/>
            <person name="Kusano J."/>
            <person name="Kanehori K."/>
            <person name="Takahashi-Fujii A."/>
            <person name="Hara H."/>
            <person name="Tanase T.-O."/>
            <person name="Nomura Y."/>
            <person name="Togiya S."/>
            <person name="Komai F."/>
            <person name="Hara R."/>
            <person name="Takeuchi K."/>
            <person name="Arita M."/>
            <person name="Imose N."/>
            <person name="Musashino K."/>
            <person name="Yuuki H."/>
            <person name="Oshima A."/>
            <person name="Sasaki N."/>
            <person name="Aotsuka S."/>
            <person name="Yoshikawa Y."/>
            <person name="Matsunawa H."/>
            <person name="Ichihara T."/>
            <person name="Shiohata N."/>
            <person name="Sano S."/>
            <person name="Moriya S."/>
            <person name="Momiyama H."/>
            <person name="Satoh N."/>
            <person name="Takami S."/>
            <person name="Terashima Y."/>
            <person name="Suzuki O."/>
            <person name="Nakagawa S."/>
            <person name="Senoh A."/>
            <person name="Mizoguchi H."/>
            <person name="Goto Y."/>
            <person name="Shimizu F."/>
            <person name="Wakebe H."/>
            <person name="Hishigaki H."/>
            <person name="Watanabe T."/>
            <person name="Sugiyama A."/>
            <person name="Takemoto M."/>
            <person name="Kawakami B."/>
            <person name="Yamazaki M."/>
            <person name="Watanabe K."/>
            <person name="Kumagai A."/>
            <person name="Itakura S."/>
            <person name="Fukuzumi Y."/>
            <person name="Fujimori Y."/>
            <person name="Komiyama M."/>
            <person name="Tashiro H."/>
            <person name="Tanigami A."/>
            <person name="Fujiwara T."/>
            <person name="Ono T."/>
            <person name="Yamada K."/>
            <person name="Fujii Y."/>
            <person name="Ozaki K."/>
            <person name="Hirao M."/>
            <person name="Ohmori Y."/>
            <person name="Kawabata A."/>
            <person name="Hikiji T."/>
            <person name="Kobatake N."/>
            <person name="Inagaki H."/>
            <person name="Ikema Y."/>
            <person name="Okamoto S."/>
            <person name="Okitani R."/>
            <person name="Kawakami T."/>
            <person name="Noguchi S."/>
            <person name="Itoh T."/>
            <person name="Shigeta K."/>
            <person name="Senba T."/>
            <person name="Matsumura K."/>
            <person name="Nakajima Y."/>
            <person name="Mizuno T."/>
            <person name="Morinaga M."/>
            <person name="Sasaki M."/>
            <person name="Togashi T."/>
            <person name="Oyama M."/>
            <person name="Hata H."/>
            <person name="Watanabe M."/>
            <person name="Komatsu T."/>
            <person name="Mizushima-Sugano J."/>
            <person name="Satoh T."/>
            <person name="Shirai Y."/>
            <person name="Takahashi Y."/>
            <person name="Nakagawa K."/>
            <person name="Okumura K."/>
            <person name="Nagase T."/>
            <person name="Nomura N."/>
            <person name="Kikuchi H."/>
            <person name="Masuho Y."/>
            <person name="Yamashita R."/>
            <person name="Nakai K."/>
            <person name="Yada T."/>
            <person name="Nakamura Y."/>
            <person name="Ohara O."/>
            <person name="Isogai T."/>
            <person name="Sugano S."/>
        </authorList>
    </citation>
    <scope>NUCLEOTIDE SEQUENCE [LARGE SCALE MRNA] (ISOFORMS 2 AND 3)</scope>
    <source>
        <tissue>Coronary artery</tissue>
        <tissue>Embryo</tissue>
        <tissue>Teratocarcinoma</tissue>
    </source>
</reference>
<reference key="2">
    <citation type="journal article" date="2004" name="Genome Res.">
        <title>The status, quality, and expansion of the NIH full-length cDNA project: the Mammalian Gene Collection (MGC).</title>
        <authorList>
            <consortium name="The MGC Project Team"/>
        </authorList>
    </citation>
    <scope>NUCLEOTIDE SEQUENCE [LARGE SCALE MRNA] (ISOFORM 1)</scope>
    <source>
        <tissue>PNS</tissue>
    </source>
</reference>
<reference key="3">
    <citation type="journal article" date="2007" name="BMC Genomics">
        <title>The full-ORF clone resource of the German cDNA consortium.</title>
        <authorList>
            <person name="Bechtel S."/>
            <person name="Rosenfelder H."/>
            <person name="Duda A."/>
            <person name="Schmidt C.P."/>
            <person name="Ernst U."/>
            <person name="Wellenreuther R."/>
            <person name="Mehrle A."/>
            <person name="Schuster C."/>
            <person name="Bahr A."/>
            <person name="Bloecker H."/>
            <person name="Heubner D."/>
            <person name="Hoerlein A."/>
            <person name="Michel G."/>
            <person name="Wedler H."/>
            <person name="Koehrer K."/>
            <person name="Ottenwaelder B."/>
            <person name="Poustka A."/>
            <person name="Wiemann S."/>
            <person name="Schupp I."/>
        </authorList>
    </citation>
    <scope>NUCLEOTIDE SEQUENCE [LARGE SCALE MRNA] OF 64-630 (ISOFORM 1)</scope>
    <source>
        <tissue>Kidney</tissue>
    </source>
</reference>
<reference key="4">
    <citation type="submission" date="2000-07" db="EMBL/GenBank/DDBJ databases">
        <authorList>
            <consortium name="The European IMAGE consortium"/>
        </authorList>
    </citation>
    <scope>NUCLEOTIDE SEQUENCE [LARGE SCALE MRNA] OF 362-630 (ISOFORM 2)</scope>
</reference>
<reference key="5">
    <citation type="journal article" date="2010" name="Trends Biochem. Sci.">
        <title>Toward a unified nomenclature for mammalian ADP-ribosyltransferases.</title>
        <authorList>
            <person name="Hottiger M.O."/>
            <person name="Hassa P.O."/>
            <person name="Luscher B."/>
            <person name="Schuler H."/>
            <person name="Koch-Nolte F."/>
        </authorList>
    </citation>
    <scope>NOMENCLATURE</scope>
</reference>
<reference key="6">
    <citation type="journal article" date="2014" name="Nat. Commun.">
        <title>Family-wide analysis of poly(ADP-ribose) polymerase activity.</title>
        <authorList>
            <person name="Vyas S."/>
            <person name="Matic I."/>
            <person name="Uchima L."/>
            <person name="Rood J."/>
            <person name="Zaja R."/>
            <person name="Hay R.T."/>
            <person name="Ahel I."/>
            <person name="Chang P."/>
        </authorList>
    </citation>
    <scope>FUNCTION</scope>
    <scope>CATALYTIC ACTIVITY</scope>
    <scope>ADP-RIBOSYLATION AT CYS-237 AND ASP-600</scope>
</reference>
<reference key="7">
    <citation type="journal article" date="2021" name="Neuro-oncol.">
        <title>Spliceosome-regulated RSRP1-dependent NF-kappaB activation promotes the glioblastoma mesenchymal phenotype.</title>
        <authorList>
            <person name="Li Y."/>
            <person name="Wang X."/>
            <person name="Qi S."/>
            <person name="Gao L."/>
            <person name="Huang G."/>
            <person name="Ren Z."/>
            <person name="Li K."/>
            <person name="Peng Y."/>
            <person name="Yi G."/>
            <person name="Guo J."/>
            <person name="Yang R."/>
            <person name="Wang H."/>
            <person name="Zhang X."/>
            <person name="Liu Y."/>
        </authorList>
    </citation>
    <scope>ALTERNATIVE SPLICING</scope>
</reference>
<organism>
    <name type="scientific">Homo sapiens</name>
    <name type="common">Human</name>
    <dbReference type="NCBI Taxonomy" id="9606"/>
    <lineage>
        <taxon>Eukaryota</taxon>
        <taxon>Metazoa</taxon>
        <taxon>Chordata</taxon>
        <taxon>Craniata</taxon>
        <taxon>Vertebrata</taxon>
        <taxon>Euteleostomi</taxon>
        <taxon>Mammalia</taxon>
        <taxon>Eutheria</taxon>
        <taxon>Euarchontoglires</taxon>
        <taxon>Primates</taxon>
        <taxon>Haplorrhini</taxon>
        <taxon>Catarrhini</taxon>
        <taxon>Hominidae</taxon>
        <taxon>Homo</taxon>
    </lineage>
</organism>
<comment type="function">
    <text evidence="2">Mono-ADP-ribosyltransferase that mediates mono-ADP-ribosylation of target proteins.</text>
</comment>
<comment type="catalytic activity">
    <reaction evidence="2">
        <text>L-aspartyl-[protein] + NAD(+) = 4-O-(ADP-D-ribosyl)-L-aspartyl-[protein] + nicotinamide</text>
        <dbReference type="Rhea" id="RHEA:54424"/>
        <dbReference type="Rhea" id="RHEA-COMP:9867"/>
        <dbReference type="Rhea" id="RHEA-COMP:13832"/>
        <dbReference type="ChEBI" id="CHEBI:17154"/>
        <dbReference type="ChEBI" id="CHEBI:29961"/>
        <dbReference type="ChEBI" id="CHEBI:57540"/>
        <dbReference type="ChEBI" id="CHEBI:138102"/>
    </reaction>
</comment>
<comment type="catalytic activity">
    <reaction evidence="2">
        <text>L-cysteinyl-[protein] + NAD(+) = S-(ADP-D-ribosyl)-L-cysteinyl-[protein] + nicotinamide + H(+)</text>
        <dbReference type="Rhea" id="RHEA:56612"/>
        <dbReference type="Rhea" id="RHEA-COMP:10131"/>
        <dbReference type="Rhea" id="RHEA-COMP:14624"/>
        <dbReference type="ChEBI" id="CHEBI:15378"/>
        <dbReference type="ChEBI" id="CHEBI:17154"/>
        <dbReference type="ChEBI" id="CHEBI:29950"/>
        <dbReference type="ChEBI" id="CHEBI:57540"/>
        <dbReference type="ChEBI" id="CHEBI:140607"/>
    </reaction>
</comment>
<comment type="alternative products">
    <event type="alternative splicing"/>
    <isoform>
        <id>Q2NL67-1</id>
        <name>1</name>
        <name evidence="4">PARP6-FL</name>
        <sequence type="displayed"/>
    </isoform>
    <isoform>
        <id>Q2NL67-2</id>
        <name>2</name>
        <name evidence="4">PARP6-S</name>
        <sequence type="described" ref="VSP_020965 VSP_020966"/>
    </isoform>
    <isoform>
        <id>Q2NL67-3</id>
        <name>3</name>
        <sequence type="described" ref="VSP_020963 VSP_020964"/>
    </isoform>
</comment>
<comment type="PTM">
    <text evidence="2">Auto-mono-ADP-ribosylated.</text>
</comment>
<comment type="similarity">
    <text evidence="6">Belongs to the ARTD/PARP family.</text>
</comment>
<comment type="sequence caution" evidence="6">
    <conflict type="erroneous initiation">
        <sequence resource="EMBL-CDS" id="BAB14969"/>
    </conflict>
    <text>Truncated N-terminus.</text>
</comment>
<comment type="sequence caution" evidence="6">
    <conflict type="erroneous initiation">
        <sequence resource="EMBL-CDS" id="CAB59261"/>
    </conflict>
    <text>Extended N-terminus.</text>
</comment>
<keyword id="KW-0013">ADP-ribosylation</keyword>
<keyword id="KW-0025">Alternative splicing</keyword>
<keyword id="KW-0328">Glycosyltransferase</keyword>
<keyword id="KW-0520">NAD</keyword>
<keyword id="KW-0548">Nucleotidyltransferase</keyword>
<keyword id="KW-1185">Reference proteome</keyword>
<keyword id="KW-0808">Transferase</keyword>
<feature type="chain" id="PRO_0000252430" description="Protein mono-ADP-ribosyltransferase PARP6">
    <location>
        <begin position="1"/>
        <end position="630"/>
    </location>
</feature>
<feature type="domain" description="PARP catalytic" evidence="1">
    <location>
        <begin position="394"/>
        <end position="620"/>
    </location>
</feature>
<feature type="modified residue" description="ADP-ribosylcysteine" evidence="2">
    <location>
        <position position="237"/>
    </location>
</feature>
<feature type="modified residue" description="ADP-ribosyl aspartic acid" evidence="2">
    <location>
        <position position="600"/>
    </location>
</feature>
<feature type="splice variant" id="VSP_020963" description="In isoform 3." evidence="3">
    <original>NPKKKNYERLQKALDS</original>
    <variation>MVELDPRTTPHSDGPD</variation>
    <location>
        <begin position="373"/>
        <end position="388"/>
    </location>
</feature>
<feature type="splice variant" id="VSP_020964" description="In isoform 3." evidence="3">
    <location>
        <begin position="389"/>
        <end position="630"/>
    </location>
</feature>
<feature type="splice variant" id="VSP_020965" description="In isoform 2." evidence="3 5">
    <original>LHGAAYGKGIYLSPISSISFG</original>
    <variation>EWEKDSTGCPPRMSWSRDTTG</variation>
    <location>
        <begin position="498"/>
        <end position="518"/>
    </location>
</feature>
<feature type="splice variant" id="VSP_020966" description="In isoform 2." evidence="3 5">
    <location>
        <begin position="519"/>
        <end position="630"/>
    </location>
</feature>
<feature type="sequence conflict" description="In Ref. 1; BAB14092." evidence="6" ref="1">
    <original>S</original>
    <variation>N</variation>
    <location>
        <position position="29"/>
    </location>
</feature>
<feature type="sequence conflict" description="In Ref. 1; BAB13896." evidence="6" ref="1">
    <original>E</original>
    <variation>G</variation>
    <location>
        <position position="264"/>
    </location>
</feature>
<feature type="sequence conflict" description="In Ref. 1; BAB14969." evidence="6" ref="1">
    <original>S</original>
    <variation>N</variation>
    <location>
        <position position="388"/>
    </location>
</feature>
<feature type="sequence conflict" description="In Ref. 1; BAB14092 and 4; CAB98250." evidence="6" ref="1 4">
    <original>R</original>
    <variation>RQ</variation>
    <location>
        <position position="436"/>
    </location>
</feature>
<dbReference type="EC" id="2.4.2.-" evidence="2"/>
<dbReference type="EMBL" id="AK021790">
    <property type="protein sequence ID" value="BAB13896.1"/>
    <property type="molecule type" value="mRNA"/>
</dbReference>
<dbReference type="EMBL" id="AK022547">
    <property type="protein sequence ID" value="BAB14092.1"/>
    <property type="molecule type" value="mRNA"/>
</dbReference>
<dbReference type="EMBL" id="AK024703">
    <property type="protein sequence ID" value="BAB14969.1"/>
    <property type="status" value="ALT_INIT"/>
    <property type="molecule type" value="mRNA"/>
</dbReference>
<dbReference type="EMBL" id="BC110902">
    <property type="protein sequence ID" value="AAI10903.1"/>
    <property type="molecule type" value="mRNA"/>
</dbReference>
<dbReference type="EMBL" id="AL122091">
    <property type="protein sequence ID" value="CAB59261.1"/>
    <property type="status" value="ALT_INIT"/>
    <property type="molecule type" value="mRNA"/>
</dbReference>
<dbReference type="EMBL" id="AL390093">
    <property type="protein sequence ID" value="CAB98250.1"/>
    <property type="molecule type" value="mRNA"/>
</dbReference>
<dbReference type="CCDS" id="CCDS10241.2">
    <molecule id="Q2NL67-1"/>
</dbReference>
<dbReference type="PIR" id="T34522">
    <property type="entry name" value="T34522"/>
</dbReference>
<dbReference type="RefSeq" id="NP_001310451.1">
    <molecule id="Q2NL67-1"/>
    <property type="nucleotide sequence ID" value="NM_001323522.2"/>
</dbReference>
<dbReference type="RefSeq" id="NP_001310461.1">
    <molecule id="Q2NL67-1"/>
    <property type="nucleotide sequence ID" value="NM_001323532.2"/>
</dbReference>
<dbReference type="RefSeq" id="NP_064599.2">
    <molecule id="Q2NL67-1"/>
    <property type="nucleotide sequence ID" value="NM_020214.4"/>
</dbReference>
<dbReference type="RefSeq" id="XP_047288830.1">
    <molecule id="Q2NL67-1"/>
    <property type="nucleotide sequence ID" value="XM_047432874.1"/>
</dbReference>
<dbReference type="RefSeq" id="XP_047288832.1">
    <molecule id="Q2NL67-2"/>
    <property type="nucleotide sequence ID" value="XM_047432876.1"/>
</dbReference>
<dbReference type="RefSeq" id="XP_054234448.1">
    <molecule id="Q2NL67-1"/>
    <property type="nucleotide sequence ID" value="XM_054378473.1"/>
</dbReference>
<dbReference type="RefSeq" id="XP_054234450.1">
    <molecule id="Q2NL67-2"/>
    <property type="nucleotide sequence ID" value="XM_054378475.1"/>
</dbReference>
<dbReference type="SMR" id="Q2NL67"/>
<dbReference type="BioGRID" id="121286">
    <property type="interactions" value="12"/>
</dbReference>
<dbReference type="FunCoup" id="Q2NL67">
    <property type="interactions" value="712"/>
</dbReference>
<dbReference type="STRING" id="9606.ENSP00000456348"/>
<dbReference type="BindingDB" id="Q2NL67"/>
<dbReference type="ChEMBL" id="CHEMBL2380187"/>
<dbReference type="DrugCentral" id="Q2NL67"/>
<dbReference type="GlyGen" id="Q2NL67">
    <property type="glycosylation" value="1 site"/>
</dbReference>
<dbReference type="iPTMnet" id="Q2NL67"/>
<dbReference type="PhosphoSitePlus" id="Q2NL67"/>
<dbReference type="BioMuta" id="PARP6"/>
<dbReference type="DMDM" id="116248567"/>
<dbReference type="MassIVE" id="Q2NL67"/>
<dbReference type="PaxDb" id="9606-ENSP00000456348"/>
<dbReference type="PeptideAtlas" id="Q2NL67"/>
<dbReference type="ProteomicsDB" id="61417">
    <molecule id="Q2NL67-1"/>
</dbReference>
<dbReference type="ProteomicsDB" id="61418">
    <molecule id="Q2NL67-2"/>
</dbReference>
<dbReference type="ProteomicsDB" id="61419">
    <molecule id="Q2NL67-3"/>
</dbReference>
<dbReference type="Antibodypedia" id="14201">
    <property type="antibodies" value="165 antibodies from 25 providers"/>
</dbReference>
<dbReference type="DNASU" id="56965"/>
<dbReference type="Ensembl" id="ENST00000260376.11">
    <molecule id="Q2NL67-2"/>
    <property type="protein sequence ID" value="ENSP00000260376.7"/>
    <property type="gene ID" value="ENSG00000137817.17"/>
</dbReference>
<dbReference type="Ensembl" id="ENST00000287196.13">
    <molecule id="Q2NL67-1"/>
    <property type="protein sequence ID" value="ENSP00000287196.9"/>
    <property type="gene ID" value="ENSG00000137817.17"/>
</dbReference>
<dbReference type="Ensembl" id="ENST00000569795.6">
    <molecule id="Q2NL67-1"/>
    <property type="protein sequence ID" value="ENSP00000456348.1"/>
    <property type="gene ID" value="ENSG00000137817.17"/>
</dbReference>
<dbReference type="GeneID" id="56965"/>
<dbReference type="KEGG" id="hsa:56965"/>
<dbReference type="MANE-Select" id="ENST00000569795.6">
    <property type="protein sequence ID" value="ENSP00000456348.1"/>
    <property type="RefSeq nucleotide sequence ID" value="NM_001323532.2"/>
    <property type="RefSeq protein sequence ID" value="NP_001310461.1"/>
</dbReference>
<dbReference type="UCSC" id="uc002auc.4">
    <molecule id="Q2NL67-1"/>
    <property type="organism name" value="human"/>
</dbReference>
<dbReference type="AGR" id="HGNC:26921"/>
<dbReference type="CTD" id="56965"/>
<dbReference type="DisGeNET" id="56965"/>
<dbReference type="GeneCards" id="PARP6"/>
<dbReference type="HGNC" id="HGNC:26921">
    <property type="gene designation" value="PARP6"/>
</dbReference>
<dbReference type="HPA" id="ENSG00000137817">
    <property type="expression patterns" value="Low tissue specificity"/>
</dbReference>
<dbReference type="MalaCards" id="PARP6"/>
<dbReference type="MIM" id="619439">
    <property type="type" value="gene"/>
</dbReference>
<dbReference type="neXtProt" id="NX_Q2NL67"/>
<dbReference type="OpenTargets" id="ENSG00000137817"/>
<dbReference type="PharmGKB" id="PA134900863"/>
<dbReference type="VEuPathDB" id="HostDB:ENSG00000137817"/>
<dbReference type="eggNOG" id="ENOG502QPRC">
    <property type="taxonomic scope" value="Eukaryota"/>
</dbReference>
<dbReference type="GeneTree" id="ENSGT00950000183129"/>
<dbReference type="InParanoid" id="Q2NL67"/>
<dbReference type="OMA" id="LGLQLKX"/>
<dbReference type="OrthoDB" id="109543at2759"/>
<dbReference type="PAN-GO" id="Q2NL67">
    <property type="GO annotations" value="3 GO annotations based on evolutionary models"/>
</dbReference>
<dbReference type="PhylomeDB" id="Q2NL67"/>
<dbReference type="TreeFam" id="TF323413"/>
<dbReference type="BRENDA" id="2.4.2.30">
    <property type="organism ID" value="2681"/>
</dbReference>
<dbReference type="PathwayCommons" id="Q2NL67"/>
<dbReference type="Reactome" id="R-HSA-197264">
    <property type="pathway name" value="Nicotinamide salvaging"/>
</dbReference>
<dbReference type="Reactome" id="R-HSA-9683610">
    <property type="pathway name" value="Maturation of nucleoprotein"/>
</dbReference>
<dbReference type="Reactome" id="R-HSA-9694631">
    <property type="pathway name" value="Maturation of nucleoprotein"/>
</dbReference>
<dbReference type="BioGRID-ORCS" id="56965">
    <property type="hits" value="16 hits in 1148 CRISPR screens"/>
</dbReference>
<dbReference type="ChiTaRS" id="PARP6">
    <property type="organism name" value="human"/>
</dbReference>
<dbReference type="GenomeRNAi" id="56965"/>
<dbReference type="Pharos" id="Q2NL67">
    <property type="development level" value="Tchem"/>
</dbReference>
<dbReference type="PRO" id="PR:Q2NL67"/>
<dbReference type="Proteomes" id="UP000005640">
    <property type="component" value="Chromosome 15"/>
</dbReference>
<dbReference type="RNAct" id="Q2NL67">
    <property type="molecule type" value="protein"/>
</dbReference>
<dbReference type="Bgee" id="ENSG00000137817">
    <property type="expression patterns" value="Expressed in cortical plate and 204 other cell types or tissues"/>
</dbReference>
<dbReference type="ExpressionAtlas" id="Q2NL67">
    <property type="expression patterns" value="baseline and differential"/>
</dbReference>
<dbReference type="GO" id="GO:0071782">
    <property type="term" value="C:endoplasmic reticulum tubular network"/>
    <property type="evidence" value="ECO:0000318"/>
    <property type="project" value="GO_Central"/>
</dbReference>
<dbReference type="GO" id="GO:0005635">
    <property type="term" value="C:nuclear envelope"/>
    <property type="evidence" value="ECO:0000318"/>
    <property type="project" value="GO_Central"/>
</dbReference>
<dbReference type="GO" id="GO:0019900">
    <property type="term" value="F:kinase binding"/>
    <property type="evidence" value="ECO:0000318"/>
    <property type="project" value="GO_Central"/>
</dbReference>
<dbReference type="GO" id="GO:0003950">
    <property type="term" value="F:NAD+ poly-ADP-ribosyltransferase activity"/>
    <property type="evidence" value="ECO:0000318"/>
    <property type="project" value="GO_Central"/>
</dbReference>
<dbReference type="GO" id="GO:0140806">
    <property type="term" value="F:NAD+-protein-aspartate ADP-ribosyltransferase activity"/>
    <property type="evidence" value="ECO:0000314"/>
    <property type="project" value="UniProtKB"/>
</dbReference>
<dbReference type="GO" id="GO:0140803">
    <property type="term" value="F:NAD+-protein-cysteine ADP-ribosyltransferase activity"/>
    <property type="evidence" value="ECO:0000314"/>
    <property type="project" value="UniProtKB"/>
</dbReference>
<dbReference type="GO" id="GO:0016779">
    <property type="term" value="F:nucleotidyltransferase activity"/>
    <property type="evidence" value="ECO:0007669"/>
    <property type="project" value="UniProtKB-KW"/>
</dbReference>
<dbReference type="GO" id="GO:0043539">
    <property type="term" value="F:protein serine/threonine kinase activator activity"/>
    <property type="evidence" value="ECO:0000318"/>
    <property type="project" value="GO_Central"/>
</dbReference>
<dbReference type="GO" id="GO:0030968">
    <property type="term" value="P:endoplasmic reticulum unfolded protein response"/>
    <property type="evidence" value="ECO:0000318"/>
    <property type="project" value="GO_Central"/>
</dbReference>
<dbReference type="GO" id="GO:0050775">
    <property type="term" value="P:positive regulation of dendrite morphogenesis"/>
    <property type="evidence" value="ECO:0007669"/>
    <property type="project" value="Ensembl"/>
</dbReference>
<dbReference type="GO" id="GO:0070213">
    <property type="term" value="P:protein auto-ADP-ribosylation"/>
    <property type="evidence" value="ECO:0000314"/>
    <property type="project" value="UniProtKB"/>
</dbReference>
<dbReference type="CDD" id="cd01341">
    <property type="entry name" value="ADP_ribosyl"/>
    <property type="match status" value="2"/>
</dbReference>
<dbReference type="FunFam" id="3.90.228.10:FF:000032">
    <property type="entry name" value="Poly [ADP-ribose] polymerase"/>
    <property type="match status" value="1"/>
</dbReference>
<dbReference type="Gene3D" id="3.90.228.10">
    <property type="match status" value="1"/>
</dbReference>
<dbReference type="InterPro" id="IPR051838">
    <property type="entry name" value="ARTD_PARP"/>
</dbReference>
<dbReference type="InterPro" id="IPR012317">
    <property type="entry name" value="Poly(ADP-ribose)pol_cat_dom"/>
</dbReference>
<dbReference type="PANTHER" id="PTHR21328">
    <property type="entry name" value="POLY ADP-RIBOSE POLYMERASE FAMILY, MEMBER PARP"/>
    <property type="match status" value="1"/>
</dbReference>
<dbReference type="Pfam" id="PF00644">
    <property type="entry name" value="PARP"/>
    <property type="match status" value="1"/>
</dbReference>
<dbReference type="SUPFAM" id="SSF56399">
    <property type="entry name" value="ADP-ribosylation"/>
    <property type="match status" value="1"/>
</dbReference>
<dbReference type="PROSITE" id="PS51059">
    <property type="entry name" value="PARP_CATALYTIC"/>
    <property type="match status" value="1"/>
</dbReference>
<accession>Q2NL67</accession>
<accession>Q9H7C5</accession>
<accession>Q9H9X6</accession>
<accession>Q9HAF3</accession>
<accession>Q9NPS6</accession>
<accession>Q9UFG4</accession>
<protein>
    <recommendedName>
        <fullName evidence="6">Protein mono-ADP-ribosyltransferase PARP6</fullName>
        <ecNumber evidence="2">2.4.2.-</ecNumber>
    </recommendedName>
    <alternativeName>
        <fullName>ADP-ribosyltransferase diphtheria toxin-like 17</fullName>
        <shortName>ARTD17</shortName>
    </alternativeName>
    <alternativeName>
        <fullName>Poly [ADP-ribose] polymerase 6</fullName>
        <shortName>PARP-6</shortName>
    </alternativeName>
</protein>